<gene>
    <name evidence="1" type="primary">pheS</name>
    <name type="ordered locus">GAU_1875</name>
</gene>
<sequence length="336" mass="36992">MNLSEYLAQADALAAECHALLAGLDVATRLDVAKGQLNALKDDRLNALQSALRMLPAEDRRAAGGAFNTLKQSIQAALDAFGQRQSAASGVVQVDATMPARGIWRGSLHPVTLVIDEISEIFRELGFTIALGPEAETEWYNFGALNFPPDHPAMELHDTLYLGEDTLLRTHTSPVQVRTLQRYAPPVRVLAPGQVYRRDFFDATHAPAFMQLEGLAVDEGVSFVDLKATLAEFARRFYGATRRVRFGPSYFPFVEPGAQMDVEVDLGDGKGLRWVEILGCGMVHPNVIEAAGLDSEKYTGWAFGMGPARIAMSRYGINDIRVLYDSDVRFLEQFAR</sequence>
<keyword id="KW-0030">Aminoacyl-tRNA synthetase</keyword>
<keyword id="KW-0067">ATP-binding</keyword>
<keyword id="KW-0963">Cytoplasm</keyword>
<keyword id="KW-0436">Ligase</keyword>
<keyword id="KW-0460">Magnesium</keyword>
<keyword id="KW-0479">Metal-binding</keyword>
<keyword id="KW-0547">Nucleotide-binding</keyword>
<keyword id="KW-0648">Protein biosynthesis</keyword>
<keyword id="KW-1185">Reference proteome</keyword>
<name>SYFA_GEMAT</name>
<reference key="1">
    <citation type="submission" date="2006-03" db="EMBL/GenBank/DDBJ databases">
        <title>Complete genome sequence of Gemmatimonas aurantiaca T-27 that represents a novel phylum Gemmatimonadetes.</title>
        <authorList>
            <person name="Takasaki K."/>
            <person name="Ichikawa N."/>
            <person name="Miura H."/>
            <person name="Matsushita S."/>
            <person name="Watanabe Y."/>
            <person name="Oguchi A."/>
            <person name="Ankai A."/>
            <person name="Yashiro I."/>
            <person name="Takahashi M."/>
            <person name="Terui Y."/>
            <person name="Fukui S."/>
            <person name="Yokoyama H."/>
            <person name="Tanikawa S."/>
            <person name="Hanada S."/>
            <person name="Kamagata Y."/>
            <person name="Fujita N."/>
        </authorList>
    </citation>
    <scope>NUCLEOTIDE SEQUENCE [LARGE SCALE GENOMIC DNA]</scope>
    <source>
        <strain>DSM 14586 / JCM 11422 / NBRC 100505 / T-27</strain>
    </source>
</reference>
<dbReference type="EC" id="6.1.1.20" evidence="1"/>
<dbReference type="EMBL" id="AP009153">
    <property type="protein sequence ID" value="BAH38917.1"/>
    <property type="molecule type" value="Genomic_DNA"/>
</dbReference>
<dbReference type="RefSeq" id="WP_012683364.1">
    <property type="nucleotide sequence ID" value="NC_012489.1"/>
</dbReference>
<dbReference type="SMR" id="C1A492"/>
<dbReference type="STRING" id="379066.GAU_1875"/>
<dbReference type="KEGG" id="gau:GAU_1875"/>
<dbReference type="eggNOG" id="COG0016">
    <property type="taxonomic scope" value="Bacteria"/>
</dbReference>
<dbReference type="HOGENOM" id="CLU_025086_0_0_0"/>
<dbReference type="OrthoDB" id="9800719at2"/>
<dbReference type="Proteomes" id="UP000002209">
    <property type="component" value="Chromosome"/>
</dbReference>
<dbReference type="GO" id="GO:0005737">
    <property type="term" value="C:cytoplasm"/>
    <property type="evidence" value="ECO:0007669"/>
    <property type="project" value="UniProtKB-SubCell"/>
</dbReference>
<dbReference type="GO" id="GO:0005524">
    <property type="term" value="F:ATP binding"/>
    <property type="evidence" value="ECO:0007669"/>
    <property type="project" value="UniProtKB-UniRule"/>
</dbReference>
<dbReference type="GO" id="GO:0000287">
    <property type="term" value="F:magnesium ion binding"/>
    <property type="evidence" value="ECO:0007669"/>
    <property type="project" value="UniProtKB-UniRule"/>
</dbReference>
<dbReference type="GO" id="GO:0004826">
    <property type="term" value="F:phenylalanine-tRNA ligase activity"/>
    <property type="evidence" value="ECO:0007669"/>
    <property type="project" value="UniProtKB-UniRule"/>
</dbReference>
<dbReference type="GO" id="GO:0000049">
    <property type="term" value="F:tRNA binding"/>
    <property type="evidence" value="ECO:0007669"/>
    <property type="project" value="InterPro"/>
</dbReference>
<dbReference type="GO" id="GO:0006432">
    <property type="term" value="P:phenylalanyl-tRNA aminoacylation"/>
    <property type="evidence" value="ECO:0007669"/>
    <property type="project" value="UniProtKB-UniRule"/>
</dbReference>
<dbReference type="CDD" id="cd00496">
    <property type="entry name" value="PheRS_alpha_core"/>
    <property type="match status" value="1"/>
</dbReference>
<dbReference type="Gene3D" id="3.30.930.10">
    <property type="entry name" value="Bira Bifunctional Protein, Domain 2"/>
    <property type="match status" value="1"/>
</dbReference>
<dbReference type="HAMAP" id="MF_00281">
    <property type="entry name" value="Phe_tRNA_synth_alpha1"/>
    <property type="match status" value="1"/>
</dbReference>
<dbReference type="InterPro" id="IPR006195">
    <property type="entry name" value="aa-tRNA-synth_II"/>
</dbReference>
<dbReference type="InterPro" id="IPR045864">
    <property type="entry name" value="aa-tRNA-synth_II/BPL/LPL"/>
</dbReference>
<dbReference type="InterPro" id="IPR004529">
    <property type="entry name" value="Phe-tRNA-synth_IIc_asu"/>
</dbReference>
<dbReference type="InterPro" id="IPR004188">
    <property type="entry name" value="Phe-tRNA_ligase_II_N"/>
</dbReference>
<dbReference type="InterPro" id="IPR022911">
    <property type="entry name" value="Phe_tRNA_ligase_alpha1_bac"/>
</dbReference>
<dbReference type="InterPro" id="IPR002319">
    <property type="entry name" value="Phenylalanyl-tRNA_Synthase"/>
</dbReference>
<dbReference type="NCBIfam" id="TIGR00468">
    <property type="entry name" value="pheS"/>
    <property type="match status" value="1"/>
</dbReference>
<dbReference type="PANTHER" id="PTHR11538:SF41">
    <property type="entry name" value="PHENYLALANINE--TRNA LIGASE, MITOCHONDRIAL"/>
    <property type="match status" value="1"/>
</dbReference>
<dbReference type="PANTHER" id="PTHR11538">
    <property type="entry name" value="PHENYLALANYL-TRNA SYNTHETASE"/>
    <property type="match status" value="1"/>
</dbReference>
<dbReference type="Pfam" id="PF02912">
    <property type="entry name" value="Phe_tRNA-synt_N"/>
    <property type="match status" value="1"/>
</dbReference>
<dbReference type="Pfam" id="PF01409">
    <property type="entry name" value="tRNA-synt_2d"/>
    <property type="match status" value="1"/>
</dbReference>
<dbReference type="SUPFAM" id="SSF55681">
    <property type="entry name" value="Class II aaRS and biotin synthetases"/>
    <property type="match status" value="1"/>
</dbReference>
<dbReference type="PROSITE" id="PS50862">
    <property type="entry name" value="AA_TRNA_LIGASE_II"/>
    <property type="match status" value="1"/>
</dbReference>
<organism>
    <name type="scientific">Gemmatimonas aurantiaca (strain DSM 14586 / JCM 11422 / NBRC 100505 / T-27)</name>
    <dbReference type="NCBI Taxonomy" id="379066"/>
    <lineage>
        <taxon>Bacteria</taxon>
        <taxon>Pseudomonadati</taxon>
        <taxon>Gemmatimonadota</taxon>
        <taxon>Gemmatimonadia</taxon>
        <taxon>Gemmatimonadales</taxon>
        <taxon>Gemmatimonadaceae</taxon>
        <taxon>Gemmatimonas</taxon>
    </lineage>
</organism>
<evidence type="ECO:0000255" key="1">
    <source>
        <dbReference type="HAMAP-Rule" id="MF_00281"/>
    </source>
</evidence>
<accession>C1A492</accession>
<proteinExistence type="inferred from homology"/>
<feature type="chain" id="PRO_1000204827" description="Phenylalanine--tRNA ligase alpha subunit">
    <location>
        <begin position="1"/>
        <end position="336"/>
    </location>
</feature>
<feature type="binding site" evidence="1">
    <location>
        <position position="255"/>
    </location>
    <ligand>
        <name>Mg(2+)</name>
        <dbReference type="ChEBI" id="CHEBI:18420"/>
        <note>shared with beta subunit</note>
    </ligand>
</feature>
<protein>
    <recommendedName>
        <fullName evidence="1">Phenylalanine--tRNA ligase alpha subunit</fullName>
        <ecNumber evidence="1">6.1.1.20</ecNumber>
    </recommendedName>
    <alternativeName>
        <fullName evidence="1">Phenylalanyl-tRNA synthetase alpha subunit</fullName>
        <shortName evidence="1">PheRS</shortName>
    </alternativeName>
</protein>
<comment type="catalytic activity">
    <reaction evidence="1">
        <text>tRNA(Phe) + L-phenylalanine + ATP = L-phenylalanyl-tRNA(Phe) + AMP + diphosphate + H(+)</text>
        <dbReference type="Rhea" id="RHEA:19413"/>
        <dbReference type="Rhea" id="RHEA-COMP:9668"/>
        <dbReference type="Rhea" id="RHEA-COMP:9699"/>
        <dbReference type="ChEBI" id="CHEBI:15378"/>
        <dbReference type="ChEBI" id="CHEBI:30616"/>
        <dbReference type="ChEBI" id="CHEBI:33019"/>
        <dbReference type="ChEBI" id="CHEBI:58095"/>
        <dbReference type="ChEBI" id="CHEBI:78442"/>
        <dbReference type="ChEBI" id="CHEBI:78531"/>
        <dbReference type="ChEBI" id="CHEBI:456215"/>
        <dbReference type="EC" id="6.1.1.20"/>
    </reaction>
</comment>
<comment type="cofactor">
    <cofactor evidence="1">
        <name>Mg(2+)</name>
        <dbReference type="ChEBI" id="CHEBI:18420"/>
    </cofactor>
    <text evidence="1">Binds 2 magnesium ions per tetramer.</text>
</comment>
<comment type="subunit">
    <text evidence="1">Tetramer of two alpha and two beta subunits.</text>
</comment>
<comment type="subcellular location">
    <subcellularLocation>
        <location evidence="1">Cytoplasm</location>
    </subcellularLocation>
</comment>
<comment type="similarity">
    <text evidence="1">Belongs to the class-II aminoacyl-tRNA synthetase family. Phe-tRNA synthetase alpha subunit type 1 subfamily.</text>
</comment>